<dbReference type="EC" id="3.6.1.23" evidence="1"/>
<dbReference type="EMBL" id="CU928163">
    <property type="protein sequence ID" value="CAR15296.1"/>
    <property type="molecule type" value="Genomic_DNA"/>
</dbReference>
<dbReference type="RefSeq" id="YP_002414793.1">
    <property type="nucleotide sequence ID" value="NC_011751.1"/>
</dbReference>
<dbReference type="SMR" id="B7NEU4"/>
<dbReference type="STRING" id="585056.ECUMN_4155"/>
<dbReference type="KEGG" id="eum:ECUMN_4155"/>
<dbReference type="PATRIC" id="fig|585056.7.peg.4329"/>
<dbReference type="HOGENOM" id="CLU_068508_1_1_6"/>
<dbReference type="UniPathway" id="UPA00610">
    <property type="reaction ID" value="UER00666"/>
</dbReference>
<dbReference type="Proteomes" id="UP000007097">
    <property type="component" value="Chromosome"/>
</dbReference>
<dbReference type="GO" id="GO:0004170">
    <property type="term" value="F:dUTP diphosphatase activity"/>
    <property type="evidence" value="ECO:0007669"/>
    <property type="project" value="UniProtKB-UniRule"/>
</dbReference>
<dbReference type="GO" id="GO:0000287">
    <property type="term" value="F:magnesium ion binding"/>
    <property type="evidence" value="ECO:0007669"/>
    <property type="project" value="UniProtKB-UniRule"/>
</dbReference>
<dbReference type="GO" id="GO:0006226">
    <property type="term" value="P:dUMP biosynthetic process"/>
    <property type="evidence" value="ECO:0007669"/>
    <property type="project" value="UniProtKB-UniRule"/>
</dbReference>
<dbReference type="GO" id="GO:0046081">
    <property type="term" value="P:dUTP catabolic process"/>
    <property type="evidence" value="ECO:0007669"/>
    <property type="project" value="InterPro"/>
</dbReference>
<dbReference type="CDD" id="cd07557">
    <property type="entry name" value="trimeric_dUTPase"/>
    <property type="match status" value="1"/>
</dbReference>
<dbReference type="FunFam" id="2.70.40.10:FF:000002">
    <property type="entry name" value="dUTP diphosphatase"/>
    <property type="match status" value="1"/>
</dbReference>
<dbReference type="Gene3D" id="2.70.40.10">
    <property type="match status" value="1"/>
</dbReference>
<dbReference type="HAMAP" id="MF_00116">
    <property type="entry name" value="dUTPase_bact"/>
    <property type="match status" value="1"/>
</dbReference>
<dbReference type="InterPro" id="IPR008181">
    <property type="entry name" value="dUTPase"/>
</dbReference>
<dbReference type="InterPro" id="IPR029054">
    <property type="entry name" value="dUTPase-like"/>
</dbReference>
<dbReference type="InterPro" id="IPR036157">
    <property type="entry name" value="dUTPase-like_sf"/>
</dbReference>
<dbReference type="InterPro" id="IPR033704">
    <property type="entry name" value="dUTPase_trimeric"/>
</dbReference>
<dbReference type="NCBIfam" id="TIGR00576">
    <property type="entry name" value="dut"/>
    <property type="match status" value="1"/>
</dbReference>
<dbReference type="NCBIfam" id="NF001862">
    <property type="entry name" value="PRK00601.1"/>
    <property type="match status" value="1"/>
</dbReference>
<dbReference type="PANTHER" id="PTHR11241">
    <property type="entry name" value="DEOXYURIDINE 5'-TRIPHOSPHATE NUCLEOTIDOHYDROLASE"/>
    <property type="match status" value="1"/>
</dbReference>
<dbReference type="PANTHER" id="PTHR11241:SF0">
    <property type="entry name" value="DEOXYURIDINE 5'-TRIPHOSPHATE NUCLEOTIDOHYDROLASE"/>
    <property type="match status" value="1"/>
</dbReference>
<dbReference type="Pfam" id="PF00692">
    <property type="entry name" value="dUTPase"/>
    <property type="match status" value="1"/>
</dbReference>
<dbReference type="SUPFAM" id="SSF51283">
    <property type="entry name" value="dUTPase-like"/>
    <property type="match status" value="1"/>
</dbReference>
<keyword id="KW-0378">Hydrolase</keyword>
<keyword id="KW-0460">Magnesium</keyword>
<keyword id="KW-0479">Metal-binding</keyword>
<keyword id="KW-0546">Nucleotide metabolism</keyword>
<gene>
    <name evidence="1" type="primary">dut</name>
    <name type="ordered locus">ECUMN_4155</name>
</gene>
<feature type="chain" id="PRO_1000117567" description="Deoxyuridine 5'-triphosphate nucleotidohydrolase">
    <location>
        <begin position="1"/>
        <end position="151"/>
    </location>
</feature>
<feature type="binding site" evidence="1">
    <location>
        <begin position="70"/>
        <end position="72"/>
    </location>
    <ligand>
        <name>substrate</name>
    </ligand>
</feature>
<feature type="binding site" evidence="1">
    <location>
        <position position="83"/>
    </location>
    <ligand>
        <name>substrate</name>
    </ligand>
</feature>
<feature type="binding site" evidence="1">
    <location>
        <begin position="87"/>
        <end position="89"/>
    </location>
    <ligand>
        <name>substrate</name>
    </ligand>
</feature>
<feature type="binding site" evidence="1">
    <location>
        <position position="97"/>
    </location>
    <ligand>
        <name>substrate</name>
    </ligand>
</feature>
<protein>
    <recommendedName>
        <fullName evidence="1">Deoxyuridine 5'-triphosphate nucleotidohydrolase</fullName>
        <shortName evidence="1">dUTPase</shortName>
        <ecNumber evidence="1">3.6.1.23</ecNumber>
    </recommendedName>
    <alternativeName>
        <fullName evidence="1">dUTP pyrophosphatase</fullName>
    </alternativeName>
</protein>
<name>DUT_ECOLU</name>
<accession>B7NEU4</accession>
<reference key="1">
    <citation type="journal article" date="2009" name="PLoS Genet.">
        <title>Organised genome dynamics in the Escherichia coli species results in highly diverse adaptive paths.</title>
        <authorList>
            <person name="Touchon M."/>
            <person name="Hoede C."/>
            <person name="Tenaillon O."/>
            <person name="Barbe V."/>
            <person name="Baeriswyl S."/>
            <person name="Bidet P."/>
            <person name="Bingen E."/>
            <person name="Bonacorsi S."/>
            <person name="Bouchier C."/>
            <person name="Bouvet O."/>
            <person name="Calteau A."/>
            <person name="Chiapello H."/>
            <person name="Clermont O."/>
            <person name="Cruveiller S."/>
            <person name="Danchin A."/>
            <person name="Diard M."/>
            <person name="Dossat C."/>
            <person name="Karoui M.E."/>
            <person name="Frapy E."/>
            <person name="Garry L."/>
            <person name="Ghigo J.M."/>
            <person name="Gilles A.M."/>
            <person name="Johnson J."/>
            <person name="Le Bouguenec C."/>
            <person name="Lescat M."/>
            <person name="Mangenot S."/>
            <person name="Martinez-Jehanne V."/>
            <person name="Matic I."/>
            <person name="Nassif X."/>
            <person name="Oztas S."/>
            <person name="Petit M.A."/>
            <person name="Pichon C."/>
            <person name="Rouy Z."/>
            <person name="Ruf C.S."/>
            <person name="Schneider D."/>
            <person name="Tourret J."/>
            <person name="Vacherie B."/>
            <person name="Vallenet D."/>
            <person name="Medigue C."/>
            <person name="Rocha E.P.C."/>
            <person name="Denamur E."/>
        </authorList>
    </citation>
    <scope>NUCLEOTIDE SEQUENCE [LARGE SCALE GENOMIC DNA]</scope>
    <source>
        <strain>UMN026 / ExPEC</strain>
    </source>
</reference>
<proteinExistence type="inferred from homology"/>
<organism>
    <name type="scientific">Escherichia coli O17:K52:H18 (strain UMN026 / ExPEC)</name>
    <dbReference type="NCBI Taxonomy" id="585056"/>
    <lineage>
        <taxon>Bacteria</taxon>
        <taxon>Pseudomonadati</taxon>
        <taxon>Pseudomonadota</taxon>
        <taxon>Gammaproteobacteria</taxon>
        <taxon>Enterobacterales</taxon>
        <taxon>Enterobacteriaceae</taxon>
        <taxon>Escherichia</taxon>
    </lineage>
</organism>
<comment type="function">
    <text evidence="1">This enzyme is involved in nucleotide metabolism: it produces dUMP, the immediate precursor of thymidine nucleotides and it decreases the intracellular concentration of dUTP so that uracil cannot be incorporated into DNA.</text>
</comment>
<comment type="catalytic activity">
    <reaction evidence="1">
        <text>dUTP + H2O = dUMP + diphosphate + H(+)</text>
        <dbReference type="Rhea" id="RHEA:10248"/>
        <dbReference type="ChEBI" id="CHEBI:15377"/>
        <dbReference type="ChEBI" id="CHEBI:15378"/>
        <dbReference type="ChEBI" id="CHEBI:33019"/>
        <dbReference type="ChEBI" id="CHEBI:61555"/>
        <dbReference type="ChEBI" id="CHEBI:246422"/>
        <dbReference type="EC" id="3.6.1.23"/>
    </reaction>
</comment>
<comment type="cofactor">
    <cofactor evidence="1">
        <name>Mg(2+)</name>
        <dbReference type="ChEBI" id="CHEBI:18420"/>
    </cofactor>
</comment>
<comment type="pathway">
    <text evidence="1">Pyrimidine metabolism; dUMP biosynthesis; dUMP from dCTP (dUTP route): step 2/2.</text>
</comment>
<comment type="subunit">
    <text evidence="1">Homotrimer.</text>
</comment>
<comment type="similarity">
    <text evidence="1">Belongs to the dUTPase family.</text>
</comment>
<evidence type="ECO:0000255" key="1">
    <source>
        <dbReference type="HAMAP-Rule" id="MF_00116"/>
    </source>
</evidence>
<sequence length="151" mass="16156">MKKIDVKILDPRVGKEFPLPTYATSGSAGLDLRACLDDAVELAPGDTTLVPTGLAIHIADPSLAAMMLPRSGLGHKHGIVLGNLVGLIDSDYQGQLMISVWNRGQDSFTIQPGERIAQMIFVPVVQAEFNLVEDFDATDRGEGGFGHSGRQ</sequence>